<gene>
    <name evidence="1" type="primary">queA</name>
    <name type="ordered locus">Ccon26_13050</name>
    <name type="ORF">CCC13826_2008</name>
</gene>
<organism>
    <name type="scientific">Campylobacter concisus (strain 13826)</name>
    <dbReference type="NCBI Taxonomy" id="360104"/>
    <lineage>
        <taxon>Bacteria</taxon>
        <taxon>Pseudomonadati</taxon>
        <taxon>Campylobacterota</taxon>
        <taxon>Epsilonproteobacteria</taxon>
        <taxon>Campylobacterales</taxon>
        <taxon>Campylobacteraceae</taxon>
        <taxon>Campylobacter</taxon>
    </lineage>
</organism>
<keyword id="KW-0963">Cytoplasm</keyword>
<keyword id="KW-0671">Queuosine biosynthesis</keyword>
<keyword id="KW-0949">S-adenosyl-L-methionine</keyword>
<keyword id="KW-0808">Transferase</keyword>
<reference key="1">
    <citation type="submission" date="2007-10" db="EMBL/GenBank/DDBJ databases">
        <title>Genome sequence of Campylobacter concisus 13826 isolated from human feces.</title>
        <authorList>
            <person name="Fouts D.E."/>
            <person name="Mongodin E.F."/>
            <person name="Puiu D."/>
            <person name="Sebastian Y."/>
            <person name="Miller W.G."/>
            <person name="Mandrell R.E."/>
            <person name="On S."/>
            <person name="Nelson K.E."/>
        </authorList>
    </citation>
    <scope>NUCLEOTIDE SEQUENCE [LARGE SCALE GENOMIC DNA]</scope>
    <source>
        <strain>13826</strain>
    </source>
</reference>
<sequence>MSDINDISSYDYFLPEMLIAKEPVLPKEEARLLVYLKKTKEIKHYKFKDLASLIPDDAAVIFNNTKVIKARILGHKQSGGACEVMLNQPLGDNKFSVYVRGRVSVGSVLNFADDIKVNVLELNDDGSRVVNFTKNGVILDTAQLFSELEKIGHVPLPPYIKRADTKDDESWYQSIFAKNSGAVAAPTASLHFSEQMLERIKAKHDIAYITLHVGAGTFKGVECQNINDHKMHSEFYELSEKAQEIISSNKPILGVGTTVTRCVEEFARSKQSSGFCKLFLNLNNKPIRQNYLLTNFHLPKSTLIMLVTSFIGLEETMRIYETAVSEKYRFYSYGDGMLVI</sequence>
<proteinExistence type="inferred from homology"/>
<name>QUEA_CAMC1</name>
<evidence type="ECO:0000255" key="1">
    <source>
        <dbReference type="HAMAP-Rule" id="MF_00113"/>
    </source>
</evidence>
<dbReference type="EC" id="2.4.99.17" evidence="1"/>
<dbReference type="EMBL" id="CP000792">
    <property type="protein sequence ID" value="ABW74807.1"/>
    <property type="molecule type" value="Genomic_DNA"/>
</dbReference>
<dbReference type="RefSeq" id="WP_048809847.1">
    <property type="nucleotide sequence ID" value="NC_009802.2"/>
</dbReference>
<dbReference type="SMR" id="A8Z6M6"/>
<dbReference type="STRING" id="360104.CCC13826_2008"/>
<dbReference type="KEGG" id="cco:CCC13826_2008"/>
<dbReference type="eggNOG" id="COG0809">
    <property type="taxonomic scope" value="Bacteria"/>
</dbReference>
<dbReference type="HOGENOM" id="CLU_039110_1_0_7"/>
<dbReference type="UniPathway" id="UPA00392"/>
<dbReference type="Proteomes" id="UP000001121">
    <property type="component" value="Chromosome"/>
</dbReference>
<dbReference type="GO" id="GO:0005737">
    <property type="term" value="C:cytoplasm"/>
    <property type="evidence" value="ECO:0007669"/>
    <property type="project" value="UniProtKB-SubCell"/>
</dbReference>
<dbReference type="GO" id="GO:0051075">
    <property type="term" value="F:S-adenosylmethionine:tRNA ribosyltransferase-isomerase activity"/>
    <property type="evidence" value="ECO:0007669"/>
    <property type="project" value="UniProtKB-EC"/>
</dbReference>
<dbReference type="GO" id="GO:0008616">
    <property type="term" value="P:queuosine biosynthetic process"/>
    <property type="evidence" value="ECO:0007669"/>
    <property type="project" value="UniProtKB-UniRule"/>
</dbReference>
<dbReference type="GO" id="GO:0002099">
    <property type="term" value="P:tRNA wobble guanine modification"/>
    <property type="evidence" value="ECO:0007669"/>
    <property type="project" value="TreeGrafter"/>
</dbReference>
<dbReference type="Gene3D" id="2.40.10.240">
    <property type="entry name" value="QueA-like"/>
    <property type="match status" value="1"/>
</dbReference>
<dbReference type="Gene3D" id="3.40.1780.10">
    <property type="entry name" value="QueA-like"/>
    <property type="match status" value="1"/>
</dbReference>
<dbReference type="HAMAP" id="MF_00113">
    <property type="entry name" value="QueA"/>
    <property type="match status" value="1"/>
</dbReference>
<dbReference type="InterPro" id="IPR003699">
    <property type="entry name" value="QueA"/>
</dbReference>
<dbReference type="InterPro" id="IPR042118">
    <property type="entry name" value="QueA_dom1"/>
</dbReference>
<dbReference type="InterPro" id="IPR042119">
    <property type="entry name" value="QueA_dom2"/>
</dbReference>
<dbReference type="InterPro" id="IPR036100">
    <property type="entry name" value="QueA_sf"/>
</dbReference>
<dbReference type="NCBIfam" id="NF001140">
    <property type="entry name" value="PRK00147.1"/>
    <property type="match status" value="1"/>
</dbReference>
<dbReference type="NCBIfam" id="TIGR00113">
    <property type="entry name" value="queA"/>
    <property type="match status" value="1"/>
</dbReference>
<dbReference type="PANTHER" id="PTHR30307">
    <property type="entry name" value="S-ADENOSYLMETHIONINE:TRNA RIBOSYLTRANSFERASE-ISOMERASE"/>
    <property type="match status" value="1"/>
</dbReference>
<dbReference type="PANTHER" id="PTHR30307:SF0">
    <property type="entry name" value="S-ADENOSYLMETHIONINE:TRNA RIBOSYLTRANSFERASE-ISOMERASE"/>
    <property type="match status" value="1"/>
</dbReference>
<dbReference type="Pfam" id="PF02547">
    <property type="entry name" value="Queuosine_synth"/>
    <property type="match status" value="1"/>
</dbReference>
<dbReference type="SUPFAM" id="SSF111337">
    <property type="entry name" value="QueA-like"/>
    <property type="match status" value="1"/>
</dbReference>
<accession>A8Z6M6</accession>
<comment type="function">
    <text evidence="1">Transfers and isomerizes the ribose moiety from AdoMet to the 7-aminomethyl group of 7-deazaguanine (preQ1-tRNA) to give epoxyqueuosine (oQ-tRNA).</text>
</comment>
<comment type="catalytic activity">
    <reaction evidence="1">
        <text>7-aminomethyl-7-carbaguanosine(34) in tRNA + S-adenosyl-L-methionine = epoxyqueuosine(34) in tRNA + adenine + L-methionine + 2 H(+)</text>
        <dbReference type="Rhea" id="RHEA:32155"/>
        <dbReference type="Rhea" id="RHEA-COMP:10342"/>
        <dbReference type="Rhea" id="RHEA-COMP:18582"/>
        <dbReference type="ChEBI" id="CHEBI:15378"/>
        <dbReference type="ChEBI" id="CHEBI:16708"/>
        <dbReference type="ChEBI" id="CHEBI:57844"/>
        <dbReference type="ChEBI" id="CHEBI:59789"/>
        <dbReference type="ChEBI" id="CHEBI:82833"/>
        <dbReference type="ChEBI" id="CHEBI:194443"/>
        <dbReference type="EC" id="2.4.99.17"/>
    </reaction>
</comment>
<comment type="pathway">
    <text evidence="1">tRNA modification; tRNA-queuosine biosynthesis.</text>
</comment>
<comment type="subunit">
    <text evidence="1">Monomer.</text>
</comment>
<comment type="subcellular location">
    <subcellularLocation>
        <location evidence="1">Cytoplasm</location>
    </subcellularLocation>
</comment>
<comment type="similarity">
    <text evidence="1">Belongs to the QueA family.</text>
</comment>
<feature type="chain" id="PRO_1000117527" description="S-adenosylmethionine:tRNA ribosyltransferase-isomerase">
    <location>
        <begin position="1"/>
        <end position="340"/>
    </location>
</feature>
<protein>
    <recommendedName>
        <fullName evidence="1">S-adenosylmethionine:tRNA ribosyltransferase-isomerase</fullName>
        <ecNumber evidence="1">2.4.99.17</ecNumber>
    </recommendedName>
    <alternativeName>
        <fullName evidence="1">Queuosine biosynthesis protein QueA</fullName>
    </alternativeName>
</protein>